<name>RSMH_SHEB9</name>
<evidence type="ECO:0000255" key="1">
    <source>
        <dbReference type="HAMAP-Rule" id="MF_01007"/>
    </source>
</evidence>
<dbReference type="EC" id="2.1.1.199" evidence="1"/>
<dbReference type="EMBL" id="CP000891">
    <property type="protein sequence ID" value="ABX47586.1"/>
    <property type="molecule type" value="Genomic_DNA"/>
</dbReference>
<dbReference type="RefSeq" id="WP_006079886.1">
    <property type="nucleotide sequence ID" value="NC_009997.1"/>
</dbReference>
<dbReference type="SMR" id="A9KY21"/>
<dbReference type="GeneID" id="11770743"/>
<dbReference type="KEGG" id="sbn:Sbal195_0405"/>
<dbReference type="HOGENOM" id="CLU_038422_2_0_6"/>
<dbReference type="Proteomes" id="UP000000770">
    <property type="component" value="Chromosome"/>
</dbReference>
<dbReference type="GO" id="GO:0005737">
    <property type="term" value="C:cytoplasm"/>
    <property type="evidence" value="ECO:0007669"/>
    <property type="project" value="UniProtKB-SubCell"/>
</dbReference>
<dbReference type="GO" id="GO:0071424">
    <property type="term" value="F:rRNA (cytosine-N4-)-methyltransferase activity"/>
    <property type="evidence" value="ECO:0007669"/>
    <property type="project" value="UniProtKB-UniRule"/>
</dbReference>
<dbReference type="GO" id="GO:0070475">
    <property type="term" value="P:rRNA base methylation"/>
    <property type="evidence" value="ECO:0007669"/>
    <property type="project" value="UniProtKB-UniRule"/>
</dbReference>
<dbReference type="FunFam" id="1.10.150.170:FF:000001">
    <property type="entry name" value="Ribosomal RNA small subunit methyltransferase H"/>
    <property type="match status" value="1"/>
</dbReference>
<dbReference type="Gene3D" id="1.10.150.170">
    <property type="entry name" value="Putative methyltransferase TM0872, insert domain"/>
    <property type="match status" value="1"/>
</dbReference>
<dbReference type="Gene3D" id="3.40.50.150">
    <property type="entry name" value="Vaccinia Virus protein VP39"/>
    <property type="match status" value="1"/>
</dbReference>
<dbReference type="HAMAP" id="MF_01007">
    <property type="entry name" value="16SrRNA_methyltr_H"/>
    <property type="match status" value="1"/>
</dbReference>
<dbReference type="InterPro" id="IPR002903">
    <property type="entry name" value="RsmH"/>
</dbReference>
<dbReference type="InterPro" id="IPR023397">
    <property type="entry name" value="SAM-dep_MeTrfase_MraW_recog"/>
</dbReference>
<dbReference type="InterPro" id="IPR029063">
    <property type="entry name" value="SAM-dependent_MTases_sf"/>
</dbReference>
<dbReference type="NCBIfam" id="TIGR00006">
    <property type="entry name" value="16S rRNA (cytosine(1402)-N(4))-methyltransferase RsmH"/>
    <property type="match status" value="1"/>
</dbReference>
<dbReference type="PANTHER" id="PTHR11265:SF0">
    <property type="entry name" value="12S RRNA N4-METHYLCYTIDINE METHYLTRANSFERASE"/>
    <property type="match status" value="1"/>
</dbReference>
<dbReference type="PANTHER" id="PTHR11265">
    <property type="entry name" value="S-ADENOSYL-METHYLTRANSFERASE MRAW"/>
    <property type="match status" value="1"/>
</dbReference>
<dbReference type="Pfam" id="PF01795">
    <property type="entry name" value="Methyltransf_5"/>
    <property type="match status" value="1"/>
</dbReference>
<dbReference type="PIRSF" id="PIRSF004486">
    <property type="entry name" value="MraW"/>
    <property type="match status" value="1"/>
</dbReference>
<dbReference type="SUPFAM" id="SSF81799">
    <property type="entry name" value="Putative methyltransferase TM0872, insert domain"/>
    <property type="match status" value="1"/>
</dbReference>
<dbReference type="SUPFAM" id="SSF53335">
    <property type="entry name" value="S-adenosyl-L-methionine-dependent methyltransferases"/>
    <property type="match status" value="1"/>
</dbReference>
<accession>A9KY21</accession>
<gene>
    <name evidence="1" type="primary">rsmH</name>
    <name type="synonym">mraW</name>
    <name type="ordered locus">Sbal195_0405</name>
</gene>
<proteinExistence type="inferred from homology"/>
<organism>
    <name type="scientific">Shewanella baltica (strain OS195)</name>
    <dbReference type="NCBI Taxonomy" id="399599"/>
    <lineage>
        <taxon>Bacteria</taxon>
        <taxon>Pseudomonadati</taxon>
        <taxon>Pseudomonadota</taxon>
        <taxon>Gammaproteobacteria</taxon>
        <taxon>Alteromonadales</taxon>
        <taxon>Shewanellaceae</taxon>
        <taxon>Shewanella</taxon>
    </lineage>
</organism>
<keyword id="KW-0963">Cytoplasm</keyword>
<keyword id="KW-0489">Methyltransferase</keyword>
<keyword id="KW-0698">rRNA processing</keyword>
<keyword id="KW-0949">S-adenosyl-L-methionine</keyword>
<keyword id="KW-0808">Transferase</keyword>
<comment type="function">
    <text evidence="1">Specifically methylates the N4 position of cytidine in position 1402 (C1402) of 16S rRNA.</text>
</comment>
<comment type="catalytic activity">
    <reaction evidence="1">
        <text>cytidine(1402) in 16S rRNA + S-adenosyl-L-methionine = N(4)-methylcytidine(1402) in 16S rRNA + S-adenosyl-L-homocysteine + H(+)</text>
        <dbReference type="Rhea" id="RHEA:42928"/>
        <dbReference type="Rhea" id="RHEA-COMP:10286"/>
        <dbReference type="Rhea" id="RHEA-COMP:10287"/>
        <dbReference type="ChEBI" id="CHEBI:15378"/>
        <dbReference type="ChEBI" id="CHEBI:57856"/>
        <dbReference type="ChEBI" id="CHEBI:59789"/>
        <dbReference type="ChEBI" id="CHEBI:74506"/>
        <dbReference type="ChEBI" id="CHEBI:82748"/>
        <dbReference type="EC" id="2.1.1.199"/>
    </reaction>
</comment>
<comment type="subcellular location">
    <subcellularLocation>
        <location evidence="1">Cytoplasm</location>
    </subcellularLocation>
</comment>
<comment type="similarity">
    <text evidence="1">Belongs to the methyltransferase superfamily. RsmH family.</text>
</comment>
<protein>
    <recommendedName>
        <fullName evidence="1">Ribosomal RNA small subunit methyltransferase H</fullName>
        <ecNumber evidence="1">2.1.1.199</ecNumber>
    </recommendedName>
    <alternativeName>
        <fullName evidence="1">16S rRNA m(4)C1402 methyltransferase</fullName>
    </alternativeName>
    <alternativeName>
        <fullName evidence="1">rRNA (cytosine-N(4)-)-methyltransferase RsmH</fullName>
    </alternativeName>
</protein>
<sequence>MSQEFAHLSVLLAETVGGLNIKDDGIYIDGTFGRGGHSRQVLQQLGENGRLIAIDRDPQAIEAAKQFADDPRFQIVHGGFGQLADYVEELGLVGKIDGVLLDLGVSSPQLDDAERGFSFMRDGPLDMRMDNSQGQTAAQWLARAEIEDMAWVFKTYGEEKNARHIARCIAADRDKTPFLRTKDLADLIARITKSKERNKHPATRVFQAIRIYINSELDQIDQALEGAVNVLAPQGRLSVISFHSLEDRIVKRFIRRHSQGESVPHGFPVTEDQINKSRKLRAVGKAIMPSDEEIERNARARSSVLRIAERLDY</sequence>
<reference key="1">
    <citation type="submission" date="2007-11" db="EMBL/GenBank/DDBJ databases">
        <title>Complete sequence of chromosome of Shewanella baltica OS195.</title>
        <authorList>
            <consortium name="US DOE Joint Genome Institute"/>
            <person name="Copeland A."/>
            <person name="Lucas S."/>
            <person name="Lapidus A."/>
            <person name="Barry K."/>
            <person name="Glavina del Rio T."/>
            <person name="Dalin E."/>
            <person name="Tice H."/>
            <person name="Pitluck S."/>
            <person name="Chain P."/>
            <person name="Malfatti S."/>
            <person name="Shin M."/>
            <person name="Vergez L."/>
            <person name="Schmutz J."/>
            <person name="Larimer F."/>
            <person name="Land M."/>
            <person name="Hauser L."/>
            <person name="Kyrpides N."/>
            <person name="Kim E."/>
            <person name="Brettar I."/>
            <person name="Rodrigues J."/>
            <person name="Konstantinidis K."/>
            <person name="Klappenbach J."/>
            <person name="Hofle M."/>
            <person name="Tiedje J."/>
            <person name="Richardson P."/>
        </authorList>
    </citation>
    <scope>NUCLEOTIDE SEQUENCE [LARGE SCALE GENOMIC DNA]</scope>
    <source>
        <strain>OS195</strain>
    </source>
</reference>
<feature type="chain" id="PRO_0000387112" description="Ribosomal RNA small subunit methyltransferase H">
    <location>
        <begin position="1"/>
        <end position="313"/>
    </location>
</feature>
<feature type="binding site" evidence="1">
    <location>
        <begin position="35"/>
        <end position="37"/>
    </location>
    <ligand>
        <name>S-adenosyl-L-methionine</name>
        <dbReference type="ChEBI" id="CHEBI:59789"/>
    </ligand>
</feature>
<feature type="binding site" evidence="1">
    <location>
        <position position="55"/>
    </location>
    <ligand>
        <name>S-adenosyl-L-methionine</name>
        <dbReference type="ChEBI" id="CHEBI:59789"/>
    </ligand>
</feature>
<feature type="binding site" evidence="1">
    <location>
        <position position="80"/>
    </location>
    <ligand>
        <name>S-adenosyl-L-methionine</name>
        <dbReference type="ChEBI" id="CHEBI:59789"/>
    </ligand>
</feature>
<feature type="binding site" evidence="1">
    <location>
        <position position="102"/>
    </location>
    <ligand>
        <name>S-adenosyl-L-methionine</name>
        <dbReference type="ChEBI" id="CHEBI:59789"/>
    </ligand>
</feature>
<feature type="binding site" evidence="1">
    <location>
        <position position="109"/>
    </location>
    <ligand>
        <name>S-adenosyl-L-methionine</name>
        <dbReference type="ChEBI" id="CHEBI:59789"/>
    </ligand>
</feature>